<keyword id="KW-0131">Cell cycle</keyword>
<keyword id="KW-0132">Cell division</keyword>
<keyword id="KW-0159">Chromosome partition</keyword>
<keyword id="KW-0963">Cytoplasm</keyword>
<keyword id="KW-0229">DNA integration</keyword>
<keyword id="KW-0233">DNA recombination</keyword>
<keyword id="KW-0238">DNA-binding</keyword>
<keyword id="KW-1185">Reference proteome</keyword>
<accession>Q3YVF5</accession>
<name>XERC_SHISS</name>
<dbReference type="EMBL" id="CP000038">
    <property type="protein sequence ID" value="AAZ90507.1"/>
    <property type="molecule type" value="Genomic_DNA"/>
</dbReference>
<dbReference type="RefSeq" id="WP_000130691.1">
    <property type="nucleotide sequence ID" value="NC_007384.1"/>
</dbReference>
<dbReference type="SMR" id="Q3YVF5"/>
<dbReference type="GeneID" id="75059707"/>
<dbReference type="KEGG" id="ssn:SSON_3984"/>
<dbReference type="HOGENOM" id="CLU_027562_9_0_6"/>
<dbReference type="Proteomes" id="UP000002529">
    <property type="component" value="Chromosome"/>
</dbReference>
<dbReference type="GO" id="GO:0005737">
    <property type="term" value="C:cytoplasm"/>
    <property type="evidence" value="ECO:0007669"/>
    <property type="project" value="UniProtKB-SubCell"/>
</dbReference>
<dbReference type="GO" id="GO:0003677">
    <property type="term" value="F:DNA binding"/>
    <property type="evidence" value="ECO:0007669"/>
    <property type="project" value="UniProtKB-KW"/>
</dbReference>
<dbReference type="GO" id="GO:0009037">
    <property type="term" value="F:tyrosine-based site-specific recombinase activity"/>
    <property type="evidence" value="ECO:0007669"/>
    <property type="project" value="UniProtKB-UniRule"/>
</dbReference>
<dbReference type="GO" id="GO:0051301">
    <property type="term" value="P:cell division"/>
    <property type="evidence" value="ECO:0007669"/>
    <property type="project" value="UniProtKB-KW"/>
</dbReference>
<dbReference type="GO" id="GO:0007059">
    <property type="term" value="P:chromosome segregation"/>
    <property type="evidence" value="ECO:0007669"/>
    <property type="project" value="UniProtKB-UniRule"/>
</dbReference>
<dbReference type="GO" id="GO:0006313">
    <property type="term" value="P:DNA transposition"/>
    <property type="evidence" value="ECO:0007669"/>
    <property type="project" value="UniProtKB-UniRule"/>
</dbReference>
<dbReference type="CDD" id="cd00798">
    <property type="entry name" value="INT_XerDC_C"/>
    <property type="match status" value="1"/>
</dbReference>
<dbReference type="FunFam" id="1.10.443.10:FF:000002">
    <property type="entry name" value="Tyrosine recombinase XerC"/>
    <property type="match status" value="1"/>
</dbReference>
<dbReference type="Gene3D" id="1.10.150.130">
    <property type="match status" value="1"/>
</dbReference>
<dbReference type="Gene3D" id="1.10.443.10">
    <property type="entry name" value="Intergrase catalytic core"/>
    <property type="match status" value="1"/>
</dbReference>
<dbReference type="HAMAP" id="MF_01808">
    <property type="entry name" value="Recomb_XerC_XerD"/>
    <property type="match status" value="1"/>
</dbReference>
<dbReference type="InterPro" id="IPR044068">
    <property type="entry name" value="CB"/>
</dbReference>
<dbReference type="InterPro" id="IPR011010">
    <property type="entry name" value="DNA_brk_join_enz"/>
</dbReference>
<dbReference type="InterPro" id="IPR013762">
    <property type="entry name" value="Integrase-like_cat_sf"/>
</dbReference>
<dbReference type="InterPro" id="IPR002104">
    <property type="entry name" value="Integrase_catalytic"/>
</dbReference>
<dbReference type="InterPro" id="IPR010998">
    <property type="entry name" value="Integrase_recombinase_N"/>
</dbReference>
<dbReference type="InterPro" id="IPR004107">
    <property type="entry name" value="Integrase_SAM-like_N"/>
</dbReference>
<dbReference type="InterPro" id="IPR011931">
    <property type="entry name" value="Recomb_XerC"/>
</dbReference>
<dbReference type="InterPro" id="IPR023009">
    <property type="entry name" value="Tyrosine_recombinase_XerC/XerD"/>
</dbReference>
<dbReference type="InterPro" id="IPR050090">
    <property type="entry name" value="Tyrosine_recombinase_XerCD"/>
</dbReference>
<dbReference type="NCBIfam" id="NF001399">
    <property type="entry name" value="PRK00283.1"/>
    <property type="match status" value="1"/>
</dbReference>
<dbReference type="NCBIfam" id="TIGR02224">
    <property type="entry name" value="recomb_XerC"/>
    <property type="match status" value="1"/>
</dbReference>
<dbReference type="PANTHER" id="PTHR30349">
    <property type="entry name" value="PHAGE INTEGRASE-RELATED"/>
    <property type="match status" value="1"/>
</dbReference>
<dbReference type="PANTHER" id="PTHR30349:SF81">
    <property type="entry name" value="TYROSINE RECOMBINASE XERC"/>
    <property type="match status" value="1"/>
</dbReference>
<dbReference type="Pfam" id="PF02899">
    <property type="entry name" value="Phage_int_SAM_1"/>
    <property type="match status" value="1"/>
</dbReference>
<dbReference type="Pfam" id="PF00589">
    <property type="entry name" value="Phage_integrase"/>
    <property type="match status" value="1"/>
</dbReference>
<dbReference type="SUPFAM" id="SSF56349">
    <property type="entry name" value="DNA breaking-rejoining enzymes"/>
    <property type="match status" value="1"/>
</dbReference>
<dbReference type="SUPFAM" id="SSF47823">
    <property type="entry name" value="lambda integrase-like, N-terminal domain"/>
    <property type="match status" value="1"/>
</dbReference>
<dbReference type="PROSITE" id="PS51900">
    <property type="entry name" value="CB"/>
    <property type="match status" value="1"/>
</dbReference>
<dbReference type="PROSITE" id="PS51898">
    <property type="entry name" value="TYR_RECOMBINASE"/>
    <property type="match status" value="1"/>
</dbReference>
<protein>
    <recommendedName>
        <fullName evidence="1">Tyrosine recombinase XerC</fullName>
    </recommendedName>
</protein>
<gene>
    <name evidence="1" type="primary">xerC</name>
    <name type="ordered locus">SSON_3984</name>
</gene>
<sequence>MTDLHTDVERYLRYLSVERQLSPITLLNYQRQLEAIINFASENGLQSWQQCDVTMVRNFAVRSRRKGLGAASLALRLSALRSFFDWLVSQNELKANPAKGVSAPKAPRHLPKNIDVDDMNRLLDIDINDPLAVRDRAMLEVMYGAGLRLSELVGLDIKHLDLESGEVWVMGKGSKERRLPIGRNAVAWIEHWLDLRDLFGSEDDALFLSKLGKRISARNVQKRFAEWGIKQGLNNHVHPHKLRHSFATHMLESSGDLRGVQELLGHANLSTTQIYTHLDFQHLASVYDAAHPRAKRGK</sequence>
<comment type="function">
    <text evidence="1">Site-specific tyrosine recombinase, which acts by catalyzing the cutting and rejoining of the recombining DNA molecules. Binds cooperatively to specific DNA consensus sequences that are separated from XerD binding sites by a short central region, forming the heterotetrameric XerC-XerD complex that recombines DNA substrates. The complex is essential to convert dimers of the bacterial chromosome into monomers to permit their segregation at cell division. It also contributes to the segregational stability of plasmids. In the complex XerC specifically exchanges the top DNA strands.</text>
</comment>
<comment type="activity regulation">
    <text evidence="1">FtsK may regulate the catalytic switch between XerC and XerD in the heterotetrameric complex during the two steps of the recombination process.</text>
</comment>
<comment type="subunit">
    <text evidence="1">Forms a cyclic heterotetrameric complex composed of two molecules of XerC and two molecules of XerD, in which XerC interacts with XerD via its C-terminal region, XerD interacts with XerC via its C-terminal region and so on.</text>
</comment>
<comment type="subcellular location">
    <subcellularLocation>
        <location evidence="1">Cytoplasm</location>
    </subcellularLocation>
</comment>
<comment type="similarity">
    <text evidence="1">Belongs to the 'phage' integrase family. XerC subfamily.</text>
</comment>
<reference key="1">
    <citation type="journal article" date="2005" name="Nucleic Acids Res.">
        <title>Genome dynamics and diversity of Shigella species, the etiologic agents of bacillary dysentery.</title>
        <authorList>
            <person name="Yang F."/>
            <person name="Yang J."/>
            <person name="Zhang X."/>
            <person name="Chen L."/>
            <person name="Jiang Y."/>
            <person name="Yan Y."/>
            <person name="Tang X."/>
            <person name="Wang J."/>
            <person name="Xiong Z."/>
            <person name="Dong J."/>
            <person name="Xue Y."/>
            <person name="Zhu Y."/>
            <person name="Xu X."/>
            <person name="Sun L."/>
            <person name="Chen S."/>
            <person name="Nie H."/>
            <person name="Peng J."/>
            <person name="Xu J."/>
            <person name="Wang Y."/>
            <person name="Yuan Z."/>
            <person name="Wen Y."/>
            <person name="Yao Z."/>
            <person name="Shen Y."/>
            <person name="Qiang B."/>
            <person name="Hou Y."/>
            <person name="Yu J."/>
            <person name="Jin Q."/>
        </authorList>
    </citation>
    <scope>NUCLEOTIDE SEQUENCE [LARGE SCALE GENOMIC DNA]</scope>
    <source>
        <strain>Ss046</strain>
    </source>
</reference>
<proteinExistence type="inferred from homology"/>
<feature type="chain" id="PRO_1000070042" description="Tyrosine recombinase XerC">
    <location>
        <begin position="1"/>
        <end position="298"/>
    </location>
</feature>
<feature type="domain" description="Core-binding (CB)" evidence="3">
    <location>
        <begin position="2"/>
        <end position="88"/>
    </location>
</feature>
<feature type="domain" description="Tyr recombinase" evidence="2">
    <location>
        <begin position="109"/>
        <end position="288"/>
    </location>
</feature>
<feature type="active site" evidence="1">
    <location>
        <position position="148"/>
    </location>
</feature>
<feature type="active site" evidence="1">
    <location>
        <position position="172"/>
    </location>
</feature>
<feature type="active site" evidence="1">
    <location>
        <position position="240"/>
    </location>
</feature>
<feature type="active site" evidence="1">
    <location>
        <position position="243"/>
    </location>
</feature>
<feature type="active site" evidence="1">
    <location>
        <position position="266"/>
    </location>
</feature>
<feature type="active site" description="O-(3'-phospho-DNA)-tyrosine intermediate" evidence="1">
    <location>
        <position position="275"/>
    </location>
</feature>
<evidence type="ECO:0000255" key="1">
    <source>
        <dbReference type="HAMAP-Rule" id="MF_01808"/>
    </source>
</evidence>
<evidence type="ECO:0000255" key="2">
    <source>
        <dbReference type="PROSITE-ProRule" id="PRU01246"/>
    </source>
</evidence>
<evidence type="ECO:0000255" key="3">
    <source>
        <dbReference type="PROSITE-ProRule" id="PRU01248"/>
    </source>
</evidence>
<organism>
    <name type="scientific">Shigella sonnei (strain Ss046)</name>
    <dbReference type="NCBI Taxonomy" id="300269"/>
    <lineage>
        <taxon>Bacteria</taxon>
        <taxon>Pseudomonadati</taxon>
        <taxon>Pseudomonadota</taxon>
        <taxon>Gammaproteobacteria</taxon>
        <taxon>Enterobacterales</taxon>
        <taxon>Enterobacteriaceae</taxon>
        <taxon>Shigella</taxon>
    </lineage>
</organism>